<evidence type="ECO:0000250" key="1">
    <source>
        <dbReference type="UniProtKB" id="P97783"/>
    </source>
</evidence>
<evidence type="ECO:0000269" key="2">
    <source>
    </source>
</evidence>
<evidence type="ECO:0000269" key="3">
    <source>
    </source>
</evidence>
<evidence type="ECO:0000269" key="4">
    <source>
    </source>
</evidence>
<evidence type="ECO:0000269" key="5">
    <source>
    </source>
</evidence>
<evidence type="ECO:0000305" key="6"/>
<organism>
    <name type="scientific">Homo sapiens</name>
    <name type="common">Human</name>
    <dbReference type="NCBI Taxonomy" id="9606"/>
    <lineage>
        <taxon>Eukaryota</taxon>
        <taxon>Metazoa</taxon>
        <taxon>Chordata</taxon>
        <taxon>Craniata</taxon>
        <taxon>Vertebrata</taxon>
        <taxon>Euteleostomi</taxon>
        <taxon>Mammalia</taxon>
        <taxon>Eutheria</taxon>
        <taxon>Euarchontoglires</taxon>
        <taxon>Primates</taxon>
        <taxon>Haplorrhini</taxon>
        <taxon>Catarrhini</taxon>
        <taxon>Hominidae</taxon>
        <taxon>Homo</taxon>
    </lineage>
</organism>
<keyword id="KW-0160">Chromosomal rearrangement</keyword>
<keyword id="KW-0963">Cytoplasm</keyword>
<keyword id="KW-0206">Cytoskeleton</keyword>
<keyword id="KW-0539">Nucleus</keyword>
<keyword id="KW-0597">Phosphoprotein</keyword>
<keyword id="KW-1267">Proteomics identification</keyword>
<keyword id="KW-0656">Proto-oncogene</keyword>
<keyword id="KW-1185">Reference proteome</keyword>
<keyword id="KW-0832">Ubl conjugation</keyword>
<reference key="1">
    <citation type="journal article" date="1995" name="Blood">
        <title>A novel gene, AF1q, fused to MLL in t(1;11)(q21;q23), is specifically expressed in leukemic and immature hematopoietic cells.</title>
        <authorList>
            <person name="Tse W."/>
            <person name="Zhu W."/>
            <person name="Chen H.S."/>
            <person name="Cohen A."/>
        </authorList>
    </citation>
    <scope>NUCLEOTIDE SEQUENCE [MRNA]</scope>
    <scope>CHROMOSOMAL REARRANGEMENT</scope>
    <scope>TISSUE SPECIFICITY</scope>
</reference>
<reference key="2">
    <citation type="submission" date="2003-05" db="EMBL/GenBank/DDBJ databases">
        <title>Cloning of human full-length CDSs in BD Creator(TM) system donor vector.</title>
        <authorList>
            <person name="Kalnine N."/>
            <person name="Chen X."/>
            <person name="Rolfs A."/>
            <person name="Halleck A."/>
            <person name="Hines L."/>
            <person name="Eisenstein S."/>
            <person name="Koundinya M."/>
            <person name="Raphael J."/>
            <person name="Moreira D."/>
            <person name="Kelley T."/>
            <person name="LaBaer J."/>
            <person name="Lin Y."/>
            <person name="Phelan M."/>
            <person name="Farmer A."/>
        </authorList>
    </citation>
    <scope>NUCLEOTIDE SEQUENCE [LARGE SCALE MRNA]</scope>
</reference>
<reference key="3">
    <citation type="submission" date="2004-06" db="EMBL/GenBank/DDBJ databases">
        <title>Cloning of human full open reading frames in Gateway(TM) system entry vector (pDONR201).</title>
        <authorList>
            <person name="Ebert L."/>
            <person name="Schick M."/>
            <person name="Neubert P."/>
            <person name="Schatten R."/>
            <person name="Henze S."/>
            <person name="Korn B."/>
        </authorList>
    </citation>
    <scope>NUCLEOTIDE SEQUENCE [LARGE SCALE MRNA]</scope>
</reference>
<reference key="4">
    <citation type="journal article" date="2006" name="Nature">
        <title>The DNA sequence and biological annotation of human chromosome 1.</title>
        <authorList>
            <person name="Gregory S.G."/>
            <person name="Barlow K.F."/>
            <person name="McLay K.E."/>
            <person name="Kaul R."/>
            <person name="Swarbreck D."/>
            <person name="Dunham A."/>
            <person name="Scott C.E."/>
            <person name="Howe K.L."/>
            <person name="Woodfine K."/>
            <person name="Spencer C.C.A."/>
            <person name="Jones M.C."/>
            <person name="Gillson C."/>
            <person name="Searle S."/>
            <person name="Zhou Y."/>
            <person name="Kokocinski F."/>
            <person name="McDonald L."/>
            <person name="Evans R."/>
            <person name="Phillips K."/>
            <person name="Atkinson A."/>
            <person name="Cooper R."/>
            <person name="Jones C."/>
            <person name="Hall R.E."/>
            <person name="Andrews T.D."/>
            <person name="Lloyd C."/>
            <person name="Ainscough R."/>
            <person name="Almeida J.P."/>
            <person name="Ambrose K.D."/>
            <person name="Anderson F."/>
            <person name="Andrew R.W."/>
            <person name="Ashwell R.I.S."/>
            <person name="Aubin K."/>
            <person name="Babbage A.K."/>
            <person name="Bagguley C.L."/>
            <person name="Bailey J."/>
            <person name="Beasley H."/>
            <person name="Bethel G."/>
            <person name="Bird C.P."/>
            <person name="Bray-Allen S."/>
            <person name="Brown J.Y."/>
            <person name="Brown A.J."/>
            <person name="Buckley D."/>
            <person name="Burton J."/>
            <person name="Bye J."/>
            <person name="Carder C."/>
            <person name="Chapman J.C."/>
            <person name="Clark S.Y."/>
            <person name="Clarke G."/>
            <person name="Clee C."/>
            <person name="Cobley V."/>
            <person name="Collier R.E."/>
            <person name="Corby N."/>
            <person name="Coville G.J."/>
            <person name="Davies J."/>
            <person name="Deadman R."/>
            <person name="Dunn M."/>
            <person name="Earthrowl M."/>
            <person name="Ellington A.G."/>
            <person name="Errington H."/>
            <person name="Frankish A."/>
            <person name="Frankland J."/>
            <person name="French L."/>
            <person name="Garner P."/>
            <person name="Garnett J."/>
            <person name="Gay L."/>
            <person name="Ghori M.R.J."/>
            <person name="Gibson R."/>
            <person name="Gilby L.M."/>
            <person name="Gillett W."/>
            <person name="Glithero R.J."/>
            <person name="Grafham D.V."/>
            <person name="Griffiths C."/>
            <person name="Griffiths-Jones S."/>
            <person name="Grocock R."/>
            <person name="Hammond S."/>
            <person name="Harrison E.S.I."/>
            <person name="Hart E."/>
            <person name="Haugen E."/>
            <person name="Heath P.D."/>
            <person name="Holmes S."/>
            <person name="Holt K."/>
            <person name="Howden P.J."/>
            <person name="Hunt A.R."/>
            <person name="Hunt S.E."/>
            <person name="Hunter G."/>
            <person name="Isherwood J."/>
            <person name="James R."/>
            <person name="Johnson C."/>
            <person name="Johnson D."/>
            <person name="Joy A."/>
            <person name="Kay M."/>
            <person name="Kershaw J.K."/>
            <person name="Kibukawa M."/>
            <person name="Kimberley A.M."/>
            <person name="King A."/>
            <person name="Knights A.J."/>
            <person name="Lad H."/>
            <person name="Laird G."/>
            <person name="Lawlor S."/>
            <person name="Leongamornlert D.A."/>
            <person name="Lloyd D.M."/>
            <person name="Loveland J."/>
            <person name="Lovell J."/>
            <person name="Lush M.J."/>
            <person name="Lyne R."/>
            <person name="Martin S."/>
            <person name="Mashreghi-Mohammadi M."/>
            <person name="Matthews L."/>
            <person name="Matthews N.S.W."/>
            <person name="McLaren S."/>
            <person name="Milne S."/>
            <person name="Mistry S."/>
            <person name="Moore M.J.F."/>
            <person name="Nickerson T."/>
            <person name="O'Dell C.N."/>
            <person name="Oliver K."/>
            <person name="Palmeiri A."/>
            <person name="Palmer S.A."/>
            <person name="Parker A."/>
            <person name="Patel D."/>
            <person name="Pearce A.V."/>
            <person name="Peck A.I."/>
            <person name="Pelan S."/>
            <person name="Phelps K."/>
            <person name="Phillimore B.J."/>
            <person name="Plumb R."/>
            <person name="Rajan J."/>
            <person name="Raymond C."/>
            <person name="Rouse G."/>
            <person name="Saenphimmachak C."/>
            <person name="Sehra H.K."/>
            <person name="Sheridan E."/>
            <person name="Shownkeen R."/>
            <person name="Sims S."/>
            <person name="Skuce C.D."/>
            <person name="Smith M."/>
            <person name="Steward C."/>
            <person name="Subramanian S."/>
            <person name="Sycamore N."/>
            <person name="Tracey A."/>
            <person name="Tromans A."/>
            <person name="Van Helmond Z."/>
            <person name="Wall M."/>
            <person name="Wallis J.M."/>
            <person name="White S."/>
            <person name="Whitehead S.L."/>
            <person name="Wilkinson J.E."/>
            <person name="Willey D.L."/>
            <person name="Williams H."/>
            <person name="Wilming L."/>
            <person name="Wray P.W."/>
            <person name="Wu Z."/>
            <person name="Coulson A."/>
            <person name="Vaudin M."/>
            <person name="Sulston J.E."/>
            <person name="Durbin R.M."/>
            <person name="Hubbard T."/>
            <person name="Wooster R."/>
            <person name="Dunham I."/>
            <person name="Carter N.P."/>
            <person name="McVean G."/>
            <person name="Ross M.T."/>
            <person name="Harrow J."/>
            <person name="Olson M.V."/>
            <person name="Beck S."/>
            <person name="Rogers J."/>
            <person name="Bentley D.R."/>
        </authorList>
    </citation>
    <scope>NUCLEOTIDE SEQUENCE [LARGE SCALE GENOMIC DNA]</scope>
</reference>
<reference key="5">
    <citation type="journal article" date="2004" name="Genome Res.">
        <title>The status, quality, and expansion of the NIH full-length cDNA project: the Mammalian Gene Collection (MGC).</title>
        <authorList>
            <consortium name="The MGC Project Team"/>
        </authorList>
    </citation>
    <scope>NUCLEOTIDE SEQUENCE [LARGE SCALE MRNA]</scope>
    <source>
        <tissue>Bone marrow</tissue>
        <tissue>Brain</tissue>
        <tissue>Lung</tissue>
    </source>
</reference>
<reference key="6">
    <citation type="journal article" date="2011" name="BMC Syst. Biol.">
        <title>Initial characterization of the human central proteome.</title>
        <authorList>
            <person name="Burkard T.R."/>
            <person name="Planyavsky M."/>
            <person name="Kaupe I."/>
            <person name="Breitwieser F.P."/>
            <person name="Buerckstuemmer T."/>
            <person name="Bennett K.L."/>
            <person name="Superti-Furga G."/>
            <person name="Colinge J."/>
        </authorList>
    </citation>
    <scope>IDENTIFICATION BY MASS SPECTROMETRY [LARGE SCALE ANALYSIS]</scope>
</reference>
<reference key="7">
    <citation type="journal article" date="2011" name="Blood">
        <title>AF1q/MLLT11 regulates the emergence of human prothymocytes through cooperative interaction with the Notch signaling pathway.</title>
        <authorList>
            <person name="Parcelier A."/>
            <person name="Maharzi N."/>
            <person name="Delord M."/>
            <person name="Robledo-Sarmiento M."/>
            <person name="Nelson E."/>
            <person name="Belakhdar-Mekid H."/>
            <person name="Pla M."/>
            <person name="Kuranda K."/>
            <person name="Parietti V."/>
            <person name="Goodhardt M."/>
            <person name="Legrand N."/>
            <person name="Bernstein I.D."/>
            <person name="Gluckman J.C."/>
            <person name="Sigaux F."/>
            <person name="Canque B."/>
        </authorList>
    </citation>
    <scope>FUNCTION</scope>
    <scope>SUBCELLULAR LOCATION</scope>
    <scope>MUTAGENESIS OF 24-LEU--LEU-32</scope>
    <scope>UBIQUITINATION</scope>
    <scope>NUCLEAR EXPORT SIGNAL</scope>
</reference>
<reference key="8">
    <citation type="journal article" date="2014" name="Exp. Cell Res.">
        <title>Degradation of AF1Q by chaperone-mediated autophagy.</title>
        <authorList>
            <person name="Li P."/>
            <person name="Ji M."/>
            <person name="Lu F."/>
            <person name="Zhang J."/>
            <person name="Li H."/>
            <person name="Cui T."/>
            <person name="Li Wang X."/>
            <person name="Tang D."/>
            <person name="Ji C."/>
        </authorList>
    </citation>
    <scope>INTERACTION WITH HSPA8 AND LAMP2</scope>
</reference>
<reference key="9">
    <citation type="journal article" date="2015" name="Oncotarget">
        <title>AF1q is a novel TCF7 co-factor which activates CD44 and promotes breast cancer metastasis.</title>
        <authorList>
            <person name="Park J."/>
            <person name="Schlederer M."/>
            <person name="Schreiber M."/>
            <person name="Ice R."/>
            <person name="Merkel O."/>
            <person name="Bilban M."/>
            <person name="Hofbauer S."/>
            <person name="Kim S."/>
            <person name="Addison J."/>
            <person name="Zou J."/>
            <person name="Ji C."/>
            <person name="Bunting S.T."/>
            <person name="Wang Z."/>
            <person name="Shoham M."/>
            <person name="Huang G."/>
            <person name="Bago-Horvath Z."/>
            <person name="Gibson L.F."/>
            <person name="Rojanasakul Y."/>
            <person name="Remick S."/>
            <person name="Ivanov A."/>
            <person name="Pugacheva E."/>
            <person name="Bunting K.D."/>
            <person name="Moriggl R."/>
            <person name="Kenner L."/>
            <person name="Tse W."/>
        </authorList>
    </citation>
    <scope>FUNCTION</scope>
    <scope>INTERACTION WITH TCF7</scope>
    <scope>SUBCELLULAR LOCATION</scope>
    <scope>TISSUE SPECIFICITY</scope>
</reference>
<accession>Q13015</accession>
<sequence length="90" mass="10061">MRDPVSSQYSSFLFWRMPIPELDLSELEGLGLSDTATYKVKDSSVGKMIGQATAADQEKNPEGDGLLEYSTFNFWRAPIASIHSFELDLL</sequence>
<proteinExistence type="evidence at protein level"/>
<gene>
    <name type="primary">MLLT11</name>
    <name type="synonym">AF1Q</name>
</gene>
<comment type="function">
    <text evidence="2 4">Cofactor for the transcription factor TCF7 (PubMed:26079538). Involved in regulation of lymphoid development by driving multipotent hematopoietic progenitor cells towards a T cell fate (PubMed:21715312).</text>
</comment>
<comment type="subunit">
    <text evidence="3 4">Interacts with HSPA8 and LAMP2 isoform A; the interaction may target MLLT11 for degradation via chaperone-mediated autophagy (PubMed:24880125). Interacts with TCF7 (PubMed:26079538).</text>
</comment>
<comment type="interaction">
    <interactant intactId="EBI-6269719">
        <id>Q13015</id>
    </interactant>
    <interactant intactId="EBI-458391">
        <id>P04271</id>
        <label>S100B</label>
    </interactant>
    <organismsDiffer>false</organismsDiffer>
    <experiments>2</experiments>
</comment>
<comment type="interaction">
    <interactant intactId="EBI-6269719">
        <id>Q13015</id>
    </interactant>
    <interactant intactId="EBI-2119465">
        <id>P36402</id>
        <label>TCF7</label>
    </interactant>
    <organismsDiffer>false</organismsDiffer>
    <experiments>2</experiments>
</comment>
<comment type="interaction">
    <interactant intactId="EBI-6269719">
        <id>Q13015</id>
    </interactant>
    <interactant intactId="EBI-6289575">
        <id>Q7L0X0</id>
        <label>TRIL</label>
    </interactant>
    <organismsDiffer>false</organismsDiffer>
    <experiments>2</experiments>
</comment>
<comment type="subcellular location">
    <subcellularLocation>
        <location evidence="2 4">Nucleus</location>
    </subcellularLocation>
    <subcellularLocation>
        <location evidence="2 4">Cytoplasm</location>
    </subcellularLocation>
    <subcellularLocation>
        <location evidence="2">Cytoplasm</location>
        <location evidence="2">Cytoskeleton</location>
        <location evidence="2">Microtubule organizing center</location>
        <location evidence="2">Centrosome</location>
    </subcellularLocation>
    <text evidence="2">Continuous nuclear export is followed by degradation.</text>
</comment>
<comment type="tissue specificity">
    <text evidence="4 5">Expressed in myoepithelial cells of normal breast tissue (at protein level) (PubMed:26079538). Highly expressed in thymus (PubMed:7833468). Expressed in colon, small intestine, prostate and ovary. Not detected in peripheral blood lymphocytes and spleen (PubMed:7833468).</text>
</comment>
<comment type="PTM">
    <text evidence="2">Ubiquitinated, leading to degradation.</text>
</comment>
<comment type="disease">
    <text>A chromosomal aberration involving MLLT11 is found in acute leukemias. Translocation t(1;11)(q21;q23) with KMT2A/MLL1.</text>
</comment>
<comment type="similarity">
    <text evidence="6">Belongs to the MLLT11 family.</text>
</comment>
<comment type="online information" name="Atlas of Genetics and Cytogenetics in Oncology and Haematology">
    <link uri="https://atlasgeneticsoncology.org/gene/12/AF1q"/>
</comment>
<name>AF1Q_HUMAN</name>
<feature type="chain" id="PRO_0000064471" description="Protein AF1q">
    <location>
        <begin position="1"/>
        <end position="90"/>
    </location>
</feature>
<feature type="short sequence motif" description="Nuclear export signal" evidence="2">
    <location>
        <begin position="24"/>
        <end position="32"/>
    </location>
</feature>
<feature type="modified residue" description="Phosphoserine" evidence="1">
    <location>
        <position position="84"/>
    </location>
</feature>
<feature type="mutagenesis site" description="Constitutive nuclear sequestration." evidence="2">
    <original>LSELEGLGL</original>
    <variation>ASEAEGAGA</variation>
    <location>
        <begin position="24"/>
        <end position="32"/>
    </location>
</feature>
<protein>
    <recommendedName>
        <fullName>Protein AF1q</fullName>
    </recommendedName>
</protein>
<dbReference type="EMBL" id="U16954">
    <property type="protein sequence ID" value="AAA70088.1"/>
    <property type="molecule type" value="mRNA"/>
</dbReference>
<dbReference type="EMBL" id="BT006799">
    <property type="protein sequence ID" value="AAP35445.1"/>
    <property type="molecule type" value="mRNA"/>
</dbReference>
<dbReference type="EMBL" id="CR456879">
    <property type="protein sequence ID" value="CAG33160.1"/>
    <property type="molecule type" value="mRNA"/>
</dbReference>
<dbReference type="EMBL" id="AL590133">
    <property type="status" value="NOT_ANNOTATED_CDS"/>
    <property type="molecule type" value="Genomic_DNA"/>
</dbReference>
<dbReference type="EMBL" id="BC006471">
    <property type="status" value="NOT_ANNOTATED_CDS"/>
    <property type="molecule type" value="mRNA"/>
</dbReference>
<dbReference type="EMBL" id="BC008445">
    <property type="protein sequence ID" value="AAH08445.1"/>
    <property type="molecule type" value="mRNA"/>
</dbReference>
<dbReference type="EMBL" id="BC009624">
    <property type="protein sequence ID" value="AAH09624.1"/>
    <property type="molecule type" value="mRNA"/>
</dbReference>
<dbReference type="EMBL" id="BC019253">
    <property type="protein sequence ID" value="AAH19253.1"/>
    <property type="molecule type" value="mRNA"/>
</dbReference>
<dbReference type="EMBL" id="BC021703">
    <property type="protein sequence ID" value="AAH21703.1"/>
    <property type="molecule type" value="mRNA"/>
</dbReference>
<dbReference type="EMBL" id="BC022448">
    <property type="protein sequence ID" value="AAH22448.1"/>
    <property type="molecule type" value="mRNA"/>
</dbReference>
<dbReference type="CCDS" id="CCDS982.1"/>
<dbReference type="PIR" id="I38889">
    <property type="entry name" value="I38889"/>
</dbReference>
<dbReference type="RefSeq" id="NP_006809.1">
    <property type="nucleotide sequence ID" value="NM_006818.4"/>
</dbReference>
<dbReference type="SMR" id="Q13015"/>
<dbReference type="BioGRID" id="116161">
    <property type="interactions" value="67"/>
</dbReference>
<dbReference type="FunCoup" id="Q13015">
    <property type="interactions" value="911"/>
</dbReference>
<dbReference type="IntAct" id="Q13015">
    <property type="interactions" value="27"/>
</dbReference>
<dbReference type="MINT" id="Q13015"/>
<dbReference type="STRING" id="9606.ENSP00000357917"/>
<dbReference type="GlyGen" id="Q13015">
    <property type="glycosylation" value="1 site, 1 O-linked glycan (1 site)"/>
</dbReference>
<dbReference type="iPTMnet" id="Q13015"/>
<dbReference type="MetOSite" id="Q13015"/>
<dbReference type="PhosphoSitePlus" id="Q13015"/>
<dbReference type="BioMuta" id="MLLT11"/>
<dbReference type="jPOST" id="Q13015"/>
<dbReference type="MassIVE" id="Q13015"/>
<dbReference type="PaxDb" id="9606-ENSP00000357917"/>
<dbReference type="PeptideAtlas" id="Q13015"/>
<dbReference type="ProteomicsDB" id="59101"/>
<dbReference type="Pumba" id="Q13015"/>
<dbReference type="TopDownProteomics" id="Q13015"/>
<dbReference type="Antibodypedia" id="34047">
    <property type="antibodies" value="116 antibodies from 22 providers"/>
</dbReference>
<dbReference type="DNASU" id="10962"/>
<dbReference type="Ensembl" id="ENST00000368921.5">
    <property type="protein sequence ID" value="ENSP00000357917.3"/>
    <property type="gene ID" value="ENSG00000213190.4"/>
</dbReference>
<dbReference type="GeneID" id="10962"/>
<dbReference type="KEGG" id="hsa:10962"/>
<dbReference type="MANE-Select" id="ENST00000368921.5">
    <property type="protein sequence ID" value="ENSP00000357917.3"/>
    <property type="RefSeq nucleotide sequence ID" value="NM_006818.4"/>
    <property type="RefSeq protein sequence ID" value="NP_006809.1"/>
</dbReference>
<dbReference type="AGR" id="HGNC:16997"/>
<dbReference type="CTD" id="10962"/>
<dbReference type="DisGeNET" id="10962"/>
<dbReference type="GeneCards" id="MLLT11"/>
<dbReference type="HGNC" id="HGNC:16997">
    <property type="gene designation" value="MLLT11"/>
</dbReference>
<dbReference type="HPA" id="ENSG00000213190">
    <property type="expression patterns" value="Tissue enhanced (brain)"/>
</dbReference>
<dbReference type="MalaCards" id="MLLT11"/>
<dbReference type="MIM" id="604684">
    <property type="type" value="gene"/>
</dbReference>
<dbReference type="neXtProt" id="NX_Q13015"/>
<dbReference type="OpenTargets" id="ENSG00000213190"/>
<dbReference type="PharmGKB" id="PA142671347"/>
<dbReference type="VEuPathDB" id="HostDB:ENSG00000213190"/>
<dbReference type="eggNOG" id="ENOG502S7MB">
    <property type="taxonomic scope" value="Eukaryota"/>
</dbReference>
<dbReference type="GeneTree" id="ENSGT00390000009895"/>
<dbReference type="HOGENOM" id="CLU_2440320_0_0_1"/>
<dbReference type="InParanoid" id="Q13015"/>
<dbReference type="OMA" id="RISPVDF"/>
<dbReference type="OrthoDB" id="9991950at2759"/>
<dbReference type="PAN-GO" id="Q13015">
    <property type="GO annotations" value="5 GO annotations based on evolutionary models"/>
</dbReference>
<dbReference type="PhylomeDB" id="Q13015"/>
<dbReference type="TreeFam" id="TF336906"/>
<dbReference type="PathwayCommons" id="Q13015"/>
<dbReference type="SignaLink" id="Q13015"/>
<dbReference type="SIGNOR" id="Q13015"/>
<dbReference type="BioGRID-ORCS" id="10962">
    <property type="hits" value="12 hits in 1153 CRISPR screens"/>
</dbReference>
<dbReference type="ChiTaRS" id="MLLT11">
    <property type="organism name" value="human"/>
</dbReference>
<dbReference type="GenomeRNAi" id="10962"/>
<dbReference type="Pharos" id="Q13015">
    <property type="development level" value="Tbio"/>
</dbReference>
<dbReference type="PRO" id="PR:Q13015"/>
<dbReference type="Proteomes" id="UP000005640">
    <property type="component" value="Chromosome 1"/>
</dbReference>
<dbReference type="RNAct" id="Q13015">
    <property type="molecule type" value="protein"/>
</dbReference>
<dbReference type="Bgee" id="ENSG00000213190">
    <property type="expression patterns" value="Expressed in pons and 199 other cell types or tissues"/>
</dbReference>
<dbReference type="ExpressionAtlas" id="Q13015">
    <property type="expression patterns" value="baseline and differential"/>
</dbReference>
<dbReference type="GO" id="GO:0005813">
    <property type="term" value="C:centrosome"/>
    <property type="evidence" value="ECO:0007669"/>
    <property type="project" value="UniProtKB-SubCell"/>
</dbReference>
<dbReference type="GO" id="GO:0005829">
    <property type="term" value="C:cytosol"/>
    <property type="evidence" value="ECO:0000314"/>
    <property type="project" value="HPA"/>
</dbReference>
<dbReference type="GO" id="GO:0005739">
    <property type="term" value="C:mitochondrion"/>
    <property type="evidence" value="ECO:0006056"/>
    <property type="project" value="FlyBase"/>
</dbReference>
<dbReference type="GO" id="GO:0005654">
    <property type="term" value="C:nucleoplasm"/>
    <property type="evidence" value="ECO:0000314"/>
    <property type="project" value="HPA"/>
</dbReference>
<dbReference type="GO" id="GO:0097191">
    <property type="term" value="P:extrinsic apoptotic signaling pathway"/>
    <property type="evidence" value="ECO:0000314"/>
    <property type="project" value="UniProtKB"/>
</dbReference>
<dbReference type="GO" id="GO:0097193">
    <property type="term" value="P:intrinsic apoptotic signaling pathway"/>
    <property type="evidence" value="ECO:0000314"/>
    <property type="project" value="UniProtKB"/>
</dbReference>
<dbReference type="GO" id="GO:0043065">
    <property type="term" value="P:positive regulation of apoptotic process"/>
    <property type="evidence" value="ECO:0000315"/>
    <property type="project" value="UniProtKB"/>
</dbReference>
<dbReference type="GO" id="GO:0045893">
    <property type="term" value="P:positive regulation of DNA-templated transcription"/>
    <property type="evidence" value="ECO:0000314"/>
    <property type="project" value="UniProtKB"/>
</dbReference>
<dbReference type="GO" id="GO:0051901">
    <property type="term" value="P:positive regulation of mitochondrial depolarization"/>
    <property type="evidence" value="ECO:0000314"/>
    <property type="project" value="UniProtKB"/>
</dbReference>
<dbReference type="GO" id="GO:0090200">
    <property type="term" value="P:positive regulation of release of cytochrome c from mitochondria"/>
    <property type="evidence" value="ECO:0000314"/>
    <property type="project" value="UniProtKB"/>
</dbReference>
<dbReference type="InterPro" id="IPR026778">
    <property type="entry name" value="MLLT11_fam"/>
</dbReference>
<dbReference type="InterPro" id="IPR033461">
    <property type="entry name" value="WRNPLPNID"/>
</dbReference>
<dbReference type="PANTHER" id="PTHR15404">
    <property type="entry name" value="PROTEIN AF1Q"/>
    <property type="match status" value="1"/>
</dbReference>
<dbReference type="PANTHER" id="PTHR15404:SF2">
    <property type="entry name" value="PROTEIN AF1Q"/>
    <property type="match status" value="1"/>
</dbReference>
<dbReference type="Pfam" id="PF15017">
    <property type="entry name" value="WRNPLPNID"/>
    <property type="match status" value="1"/>
</dbReference>